<sequence length="802" mass="89516">MVSVNGVPAARLPVTLPGEDRASRKAPDYLMVEQPPFDELMYTIGETIELSCAAEDASTTTKWCKDGIGIVPNNRTSTRQGLLKIINVSSDDSGIYSCRLWHSTEILRNFTIRVTDLPSSGDDEDDDDDDDDETEDREPPRWTQPERMEKKLIAVPAANTIRFRCPAAGNPTPTIHWLKNGKEFRGEHRIGGIKLRHQQWSLVMESVVPSDKGNYTCVVENKYGSIRQTYQLDVLERSSHRPILQAGLPGNQTVVLGSDVEFHCKVYSDAQPHIQWLKHVEVNGSKYGPDGDPYVSVLQSFINGTEVDSTLSLKNVTETNEGQYVCRANNFIGVAEASFWLHIYKPAPAEPVEKALTTSSSSITVLIVVTSTIVFILLVIIVITHLMKVPSKKSMTAPPVHKVSKFPLKRQQVSLESNSSMNSNTPLVRITHLSSSDGTMLANVSELGLPLDPKWELLRSRLTLGKPLGEGCFGQVVMAEAIGIDKERPNKPATVAVKMLKDDATDKDLSDLVSEMEMMKMIGKHKNIINLLGACTQDGPLYVLVEYASKGSLREYLKARRPPGMDYSFDACKIPAEQLTFKDLVSCAYQVARGMEYLASQKCIHRDLAARNVLVTDDNVMKIADFGLARDIHNIDYYKKTTNGRLPVKWMAPEALFDRIYTHHSDVWSYGVLLWEIFTLGGSPYPGIPVEELFKLLKEGHRMDKPANCTHELYMIMRECWHAVPSQRPAFKQLVEDLDRVLTVTSTNEYLDLSVAFEQYSPPSQDSHSTCSSGDDSVFAHDILPDEPCLPKHQQHNGAIPT</sequence>
<protein>
    <recommendedName>
        <fullName>Fibroblast growth factor receptor 3</fullName>
        <shortName>FGFR-3</shortName>
        <ecNumber>2.7.10.1</ecNumber>
    </recommendedName>
</protein>
<proteinExistence type="evidence at transcript level"/>
<comment type="function">
    <text evidence="1">Tyrosine-protein kinase that acts as a cell-surface receptor for fibroblast growth factors and plays an essential role in the regulation of cell proliferation, differentiation and apoptosis. Plays an essential role in the regulation of chondrocyte differentiation, proliferation and apoptosis, and is required for normal skeleton development. Regulates both osteogenesis and postnatal bone mineralization by osteoblasts. Promotes apoptosis in chondrocytes, but can also promote cancer cell proliferation. Phosphorylates PLCG1, CBL and FRS2. Ligand binding leads to the activation of several signaling cascades. Activation of PLCG1 leads to the production of the cellular signaling molecules diacylglycerol and inositol 1,4,5-trisphosphate. Phosphorylation of FRS2 triggers recruitment of GRB2, GAB1, PIK3R1 and SOS1, and mediates activation of RAS, MAPK1/ERK2, MAPK3/ERK1 and the MAP kinase signaling pathway, as well as of the AKT1 signaling pathway (By similarity).</text>
</comment>
<comment type="catalytic activity">
    <reaction evidence="5">
        <text>L-tyrosyl-[protein] + ATP = O-phospho-L-tyrosyl-[protein] + ADP + H(+)</text>
        <dbReference type="Rhea" id="RHEA:10596"/>
        <dbReference type="Rhea" id="RHEA-COMP:10136"/>
        <dbReference type="Rhea" id="RHEA-COMP:20101"/>
        <dbReference type="ChEBI" id="CHEBI:15378"/>
        <dbReference type="ChEBI" id="CHEBI:30616"/>
        <dbReference type="ChEBI" id="CHEBI:46858"/>
        <dbReference type="ChEBI" id="CHEBI:61978"/>
        <dbReference type="ChEBI" id="CHEBI:456216"/>
        <dbReference type="EC" id="2.7.10.1"/>
    </reaction>
</comment>
<comment type="activity regulation">
    <text evidence="1">Present in an inactive conformation in the absence of bound ligand. Ligand binding leads to dimerization and activation by autophosphorylation on tyrosine residues (By similarity).</text>
</comment>
<comment type="subunit">
    <text evidence="1">Monomer. Homodimer after ligand binding (By similarity).</text>
</comment>
<comment type="subcellular location">
    <subcellularLocation>
        <location evidence="1">Cell membrane</location>
        <topology evidence="1">Single-pass type I membrane protein</topology>
    </subcellularLocation>
</comment>
<comment type="domain">
    <text evidence="1">The second and third Ig-like domains directly interact with fibroblast growth factors (FGF) and heparan sulfate proteoglycans.</text>
</comment>
<comment type="PTM">
    <text evidence="1">Autophosphorylated. Binding of FGF family members together with heparan sulfate proteoglycan or heparin promotes receptor dimerization and autophosphorylation on tyrosine residues. Autophosphorylation occurs in trans between the two FGFR molecules present in the dimer (By similarity).</text>
</comment>
<comment type="similarity">
    <text evidence="4">Belongs to the protein kinase superfamily. Tyr protein kinase family. Fibroblast growth factor receptor subfamily.</text>
</comment>
<evidence type="ECO:0000250" key="1"/>
<evidence type="ECO:0000255" key="2"/>
<evidence type="ECO:0000255" key="3">
    <source>
        <dbReference type="PROSITE-ProRule" id="PRU00114"/>
    </source>
</evidence>
<evidence type="ECO:0000255" key="4">
    <source>
        <dbReference type="PROSITE-ProRule" id="PRU00159"/>
    </source>
</evidence>
<evidence type="ECO:0000255" key="5">
    <source>
        <dbReference type="PROSITE-ProRule" id="PRU10028"/>
    </source>
</evidence>
<evidence type="ECO:0000256" key="6">
    <source>
        <dbReference type="SAM" id="MobiDB-lite"/>
    </source>
</evidence>
<reference key="1">
    <citation type="journal article" date="1999" name="Dev. Biol.">
        <title>FGF signaling and the anterior neural induction in Xenopus.</title>
        <authorList>
            <person name="Hongo I."/>
            <person name="Kengaku M."/>
            <person name="Okamoto H."/>
        </authorList>
    </citation>
    <scope>NUCLEOTIDE SEQUENCE [MRNA]</scope>
</reference>
<dbReference type="EC" id="2.7.10.1"/>
<dbReference type="EMBL" id="AB007035">
    <property type="protein sequence ID" value="BAA22281.1"/>
    <property type="molecule type" value="mRNA"/>
</dbReference>
<dbReference type="RefSeq" id="NP_001084170.1">
    <property type="nucleotide sequence ID" value="NM_001090701.1"/>
</dbReference>
<dbReference type="SMR" id="O42127"/>
<dbReference type="GlyCosmos" id="O42127">
    <property type="glycosylation" value="8 sites, No reported glycans"/>
</dbReference>
<dbReference type="GeneID" id="399347"/>
<dbReference type="KEGG" id="xla:399347"/>
<dbReference type="AGR" id="Xenbase:XB-GENE-17330101"/>
<dbReference type="CTD" id="399347"/>
<dbReference type="Xenbase" id="XB-GENE-17330101">
    <property type="gene designation" value="fgfr3.S"/>
</dbReference>
<dbReference type="OrthoDB" id="5984265at2759"/>
<dbReference type="Proteomes" id="UP000186698">
    <property type="component" value="Chromosome 1S"/>
</dbReference>
<dbReference type="Bgee" id="399347">
    <property type="expression patterns" value="Expressed in zone of skin and 15 other cell types or tissues"/>
</dbReference>
<dbReference type="GO" id="GO:0005886">
    <property type="term" value="C:plasma membrane"/>
    <property type="evidence" value="ECO:0000318"/>
    <property type="project" value="GO_Central"/>
</dbReference>
<dbReference type="GO" id="GO:0043235">
    <property type="term" value="C:receptor complex"/>
    <property type="evidence" value="ECO:0000318"/>
    <property type="project" value="GO_Central"/>
</dbReference>
<dbReference type="GO" id="GO:0005524">
    <property type="term" value="F:ATP binding"/>
    <property type="evidence" value="ECO:0007669"/>
    <property type="project" value="UniProtKB-KW"/>
</dbReference>
<dbReference type="GO" id="GO:0017134">
    <property type="term" value="F:fibroblast growth factor binding"/>
    <property type="evidence" value="ECO:0000318"/>
    <property type="project" value="GO_Central"/>
</dbReference>
<dbReference type="GO" id="GO:0005007">
    <property type="term" value="F:fibroblast growth factor receptor activity"/>
    <property type="evidence" value="ECO:0000318"/>
    <property type="project" value="GO_Central"/>
</dbReference>
<dbReference type="GO" id="GO:0006915">
    <property type="term" value="P:apoptotic process"/>
    <property type="evidence" value="ECO:0007669"/>
    <property type="project" value="UniProtKB-KW"/>
</dbReference>
<dbReference type="GO" id="GO:0008543">
    <property type="term" value="P:fibroblast growth factor receptor signaling pathway"/>
    <property type="evidence" value="ECO:0000318"/>
    <property type="project" value="GO_Central"/>
</dbReference>
<dbReference type="GO" id="GO:0008284">
    <property type="term" value="P:positive regulation of cell population proliferation"/>
    <property type="evidence" value="ECO:0000318"/>
    <property type="project" value="GO_Central"/>
</dbReference>
<dbReference type="GO" id="GO:0043410">
    <property type="term" value="P:positive regulation of MAPK cascade"/>
    <property type="evidence" value="ECO:0000318"/>
    <property type="project" value="GO_Central"/>
</dbReference>
<dbReference type="CDD" id="cd05857">
    <property type="entry name" value="IgI_2_FGFR"/>
    <property type="match status" value="1"/>
</dbReference>
<dbReference type="CDD" id="cd04974">
    <property type="entry name" value="IgI_3_FGFR"/>
    <property type="match status" value="1"/>
</dbReference>
<dbReference type="CDD" id="cd05100">
    <property type="entry name" value="PTKc_FGFR3"/>
    <property type="match status" value="1"/>
</dbReference>
<dbReference type="FunFam" id="1.10.510.10:FF:000007">
    <property type="entry name" value="Fibroblast growth factor receptor"/>
    <property type="match status" value="1"/>
</dbReference>
<dbReference type="FunFam" id="2.60.40.10:FF:000016">
    <property type="entry name" value="Fibroblast growth factor receptor"/>
    <property type="match status" value="1"/>
</dbReference>
<dbReference type="FunFam" id="2.60.40.10:FF:000020">
    <property type="entry name" value="Fibroblast growth factor receptor"/>
    <property type="match status" value="1"/>
</dbReference>
<dbReference type="FunFam" id="2.60.40.10:FF:000423">
    <property type="entry name" value="Fibroblast growth factor receptor"/>
    <property type="match status" value="1"/>
</dbReference>
<dbReference type="FunFam" id="3.30.200.20:FF:000011">
    <property type="entry name" value="Fibroblast growth factor receptor"/>
    <property type="match status" value="1"/>
</dbReference>
<dbReference type="Gene3D" id="2.60.40.10">
    <property type="entry name" value="Immunoglobulins"/>
    <property type="match status" value="3"/>
</dbReference>
<dbReference type="Gene3D" id="3.30.200.20">
    <property type="entry name" value="Phosphorylase Kinase, domain 1"/>
    <property type="match status" value="1"/>
</dbReference>
<dbReference type="Gene3D" id="1.10.510.10">
    <property type="entry name" value="Transferase(Phosphotransferase) domain 1"/>
    <property type="match status" value="1"/>
</dbReference>
<dbReference type="InterPro" id="IPR016248">
    <property type="entry name" value="FGF_rcpt_fam"/>
</dbReference>
<dbReference type="InterPro" id="IPR007110">
    <property type="entry name" value="Ig-like_dom"/>
</dbReference>
<dbReference type="InterPro" id="IPR036179">
    <property type="entry name" value="Ig-like_dom_sf"/>
</dbReference>
<dbReference type="InterPro" id="IPR013783">
    <property type="entry name" value="Ig-like_fold"/>
</dbReference>
<dbReference type="InterPro" id="IPR013098">
    <property type="entry name" value="Ig_I-set"/>
</dbReference>
<dbReference type="InterPro" id="IPR003599">
    <property type="entry name" value="Ig_sub"/>
</dbReference>
<dbReference type="InterPro" id="IPR003598">
    <property type="entry name" value="Ig_sub2"/>
</dbReference>
<dbReference type="InterPro" id="IPR011009">
    <property type="entry name" value="Kinase-like_dom_sf"/>
</dbReference>
<dbReference type="InterPro" id="IPR000719">
    <property type="entry name" value="Prot_kinase_dom"/>
</dbReference>
<dbReference type="InterPro" id="IPR017441">
    <property type="entry name" value="Protein_kinase_ATP_BS"/>
</dbReference>
<dbReference type="InterPro" id="IPR050122">
    <property type="entry name" value="RTK"/>
</dbReference>
<dbReference type="InterPro" id="IPR001245">
    <property type="entry name" value="Ser-Thr/Tyr_kinase_cat_dom"/>
</dbReference>
<dbReference type="InterPro" id="IPR008266">
    <property type="entry name" value="Tyr_kinase_AS"/>
</dbReference>
<dbReference type="InterPro" id="IPR020635">
    <property type="entry name" value="Tyr_kinase_cat_dom"/>
</dbReference>
<dbReference type="PANTHER" id="PTHR24416:SF505">
    <property type="entry name" value="FIBROBLAST GROWTH FACTOR RECEPTOR 3"/>
    <property type="match status" value="1"/>
</dbReference>
<dbReference type="PANTHER" id="PTHR24416">
    <property type="entry name" value="TYROSINE-PROTEIN KINASE RECEPTOR"/>
    <property type="match status" value="1"/>
</dbReference>
<dbReference type="Pfam" id="PF07679">
    <property type="entry name" value="I-set"/>
    <property type="match status" value="1"/>
</dbReference>
<dbReference type="Pfam" id="PF13927">
    <property type="entry name" value="Ig_3"/>
    <property type="match status" value="2"/>
</dbReference>
<dbReference type="Pfam" id="PF07714">
    <property type="entry name" value="PK_Tyr_Ser-Thr"/>
    <property type="match status" value="1"/>
</dbReference>
<dbReference type="PIRSF" id="PIRSF000628">
    <property type="entry name" value="FGFR"/>
    <property type="match status" value="1"/>
</dbReference>
<dbReference type="PRINTS" id="PR00109">
    <property type="entry name" value="TYRKINASE"/>
</dbReference>
<dbReference type="SMART" id="SM00409">
    <property type="entry name" value="IG"/>
    <property type="match status" value="3"/>
</dbReference>
<dbReference type="SMART" id="SM00408">
    <property type="entry name" value="IGc2"/>
    <property type="match status" value="3"/>
</dbReference>
<dbReference type="SMART" id="SM00219">
    <property type="entry name" value="TyrKc"/>
    <property type="match status" value="1"/>
</dbReference>
<dbReference type="SUPFAM" id="SSF48726">
    <property type="entry name" value="Immunoglobulin"/>
    <property type="match status" value="3"/>
</dbReference>
<dbReference type="SUPFAM" id="SSF56112">
    <property type="entry name" value="Protein kinase-like (PK-like)"/>
    <property type="match status" value="1"/>
</dbReference>
<dbReference type="PROSITE" id="PS50835">
    <property type="entry name" value="IG_LIKE"/>
    <property type="match status" value="3"/>
</dbReference>
<dbReference type="PROSITE" id="PS00107">
    <property type="entry name" value="PROTEIN_KINASE_ATP"/>
    <property type="match status" value="1"/>
</dbReference>
<dbReference type="PROSITE" id="PS50011">
    <property type="entry name" value="PROTEIN_KINASE_DOM"/>
    <property type="match status" value="1"/>
</dbReference>
<dbReference type="PROSITE" id="PS00109">
    <property type="entry name" value="PROTEIN_KINASE_TYR"/>
    <property type="match status" value="1"/>
</dbReference>
<organism>
    <name type="scientific">Xenopus laevis</name>
    <name type="common">African clawed frog</name>
    <dbReference type="NCBI Taxonomy" id="8355"/>
    <lineage>
        <taxon>Eukaryota</taxon>
        <taxon>Metazoa</taxon>
        <taxon>Chordata</taxon>
        <taxon>Craniata</taxon>
        <taxon>Vertebrata</taxon>
        <taxon>Euteleostomi</taxon>
        <taxon>Amphibia</taxon>
        <taxon>Batrachia</taxon>
        <taxon>Anura</taxon>
        <taxon>Pipoidea</taxon>
        <taxon>Pipidae</taxon>
        <taxon>Xenopodinae</taxon>
        <taxon>Xenopus</taxon>
        <taxon>Xenopus</taxon>
    </lineage>
</organism>
<feature type="signal peptide" evidence="2">
    <location>
        <begin position="1"/>
        <end status="unknown"/>
    </location>
</feature>
<feature type="chain" id="PRO_0000249206" description="Fibroblast growth factor receptor 3">
    <location>
        <begin status="unknown"/>
        <end position="802"/>
    </location>
</feature>
<feature type="topological domain" description="Extracellular" evidence="2">
    <location>
        <begin status="unknown"/>
        <end position="362"/>
    </location>
</feature>
<feature type="transmembrane region" description="Helical" evidence="2">
    <location>
        <begin position="363"/>
        <end position="383"/>
    </location>
</feature>
<feature type="topological domain" description="Cytoplasmic" evidence="2">
    <location>
        <begin position="384"/>
        <end position="802"/>
    </location>
</feature>
<feature type="domain" description="Ig-like C2-type 1">
    <location>
        <begin position="27"/>
        <end position="115"/>
    </location>
</feature>
<feature type="domain" description="Ig-like C2-type 2">
    <location>
        <begin position="140"/>
        <end position="233"/>
    </location>
</feature>
<feature type="domain" description="Ig-like C2-type 3">
    <location>
        <begin position="242"/>
        <end position="342"/>
    </location>
</feature>
<feature type="domain" description="Protein kinase" evidence="4">
    <location>
        <begin position="462"/>
        <end position="751"/>
    </location>
</feature>
<feature type="region of interest" description="Disordered" evidence="6">
    <location>
        <begin position="116"/>
        <end position="148"/>
    </location>
</feature>
<feature type="compositionally biased region" description="Acidic residues" evidence="6">
    <location>
        <begin position="121"/>
        <end position="136"/>
    </location>
</feature>
<feature type="compositionally biased region" description="Basic and acidic residues" evidence="6">
    <location>
        <begin position="137"/>
        <end position="148"/>
    </location>
</feature>
<feature type="active site" description="Proton acceptor" evidence="4 5">
    <location>
        <position position="607"/>
    </location>
</feature>
<feature type="binding site" evidence="4">
    <location>
        <begin position="468"/>
        <end position="476"/>
    </location>
    <ligand>
        <name>ATP</name>
        <dbReference type="ChEBI" id="CHEBI:30616"/>
    </ligand>
</feature>
<feature type="binding site" evidence="4">
    <location>
        <position position="498"/>
    </location>
    <ligand>
        <name>ATP</name>
        <dbReference type="ChEBI" id="CHEBI:30616"/>
    </ligand>
</feature>
<feature type="modified residue" description="Phosphotyrosine; by autocatalysis" evidence="1">
    <location>
        <position position="637"/>
    </location>
</feature>
<feature type="modified residue" description="Phosphotyrosine; by autocatalysis" evidence="1">
    <location>
        <position position="638"/>
    </location>
</feature>
<feature type="modified residue" description="Phosphotyrosine; by autocatalysis" evidence="1">
    <location>
        <position position="714"/>
    </location>
</feature>
<feature type="modified residue" description="Phosphotyrosine; by autocatalysis" evidence="1">
    <location>
        <position position="750"/>
    </location>
</feature>
<feature type="glycosylation site" description="N-linked (GlcNAc...) asparagine" evidence="2">
    <location>
        <position position="74"/>
    </location>
</feature>
<feature type="glycosylation site" description="N-linked (GlcNAc...) asparagine" evidence="2">
    <location>
        <position position="87"/>
    </location>
</feature>
<feature type="glycosylation site" description="N-linked (GlcNAc...) asparagine" evidence="2">
    <location>
        <position position="109"/>
    </location>
</feature>
<feature type="glycosylation site" description="N-linked (GlcNAc...) asparagine" evidence="2">
    <location>
        <position position="214"/>
    </location>
</feature>
<feature type="glycosylation site" description="N-linked (GlcNAc...) asparagine" evidence="2">
    <location>
        <position position="251"/>
    </location>
</feature>
<feature type="glycosylation site" description="N-linked (GlcNAc...) asparagine" evidence="2">
    <location>
        <position position="283"/>
    </location>
</feature>
<feature type="glycosylation site" description="N-linked (GlcNAc...) asparagine" evidence="2">
    <location>
        <position position="303"/>
    </location>
</feature>
<feature type="glycosylation site" description="N-linked (GlcNAc...) asparagine" evidence="2">
    <location>
        <position position="315"/>
    </location>
</feature>
<feature type="disulfide bond" evidence="3">
    <location>
        <begin position="52"/>
        <end position="98"/>
    </location>
</feature>
<feature type="disulfide bond" evidence="3">
    <location>
        <begin position="165"/>
        <end position="217"/>
    </location>
</feature>
<feature type="disulfide bond" evidence="3">
    <location>
        <begin position="264"/>
        <end position="326"/>
    </location>
</feature>
<accession>O42127</accession>
<name>FGFR3_XENLA</name>
<gene>
    <name type="primary">fgfr3</name>
</gene>
<keyword id="KW-0053">Apoptosis</keyword>
<keyword id="KW-0067">ATP-binding</keyword>
<keyword id="KW-1003">Cell membrane</keyword>
<keyword id="KW-1015">Disulfide bond</keyword>
<keyword id="KW-0325">Glycoprotein</keyword>
<keyword id="KW-0393">Immunoglobulin domain</keyword>
<keyword id="KW-0418">Kinase</keyword>
<keyword id="KW-0472">Membrane</keyword>
<keyword id="KW-0547">Nucleotide-binding</keyword>
<keyword id="KW-0597">Phosphoprotein</keyword>
<keyword id="KW-0675">Receptor</keyword>
<keyword id="KW-1185">Reference proteome</keyword>
<keyword id="KW-0677">Repeat</keyword>
<keyword id="KW-0732">Signal</keyword>
<keyword id="KW-0808">Transferase</keyword>
<keyword id="KW-0812">Transmembrane</keyword>
<keyword id="KW-1133">Transmembrane helix</keyword>
<keyword id="KW-0829">Tyrosine-protein kinase</keyword>